<feature type="chain" id="PRO_0000112176" description="ATP synthase subunit c">
    <location>
        <begin position="1"/>
        <end position="84"/>
    </location>
</feature>
<feature type="transmembrane region" description="Helical" evidence="2">
    <location>
        <begin position="10"/>
        <end position="30"/>
    </location>
</feature>
<feature type="transmembrane region" description="Helical" evidence="2">
    <location>
        <begin position="53"/>
        <end position="73"/>
    </location>
</feature>
<feature type="site" description="Reversibly protonated during proton transport" evidence="2">
    <location>
        <position position="60"/>
    </location>
</feature>
<evidence type="ECO:0000250" key="1"/>
<evidence type="ECO:0000255" key="2">
    <source>
        <dbReference type="HAMAP-Rule" id="MF_01396"/>
    </source>
</evidence>
<accession>P0A309</accession>
<accession>P12991</accession>
<reference key="1">
    <citation type="journal article" date="1989" name="Nucleic Acids Res.">
        <title>Nucleotide sequence of the unc operon of Vibrio alginolyticus.</title>
        <authorList>
            <person name="Krumholz L.R."/>
            <person name="Esser U."/>
            <person name="Simoni R.D."/>
        </authorList>
    </citation>
    <scope>NUCLEOTIDE SEQUENCE [GENOMIC DNA]</scope>
    <source>
        <strain>138-2</strain>
    </source>
</reference>
<comment type="function">
    <text evidence="2">F(1)F(0) ATP synthase produces ATP from ADP in the presence of a proton or sodium gradient. F-type ATPases consist of two structural domains, F(1) containing the extramembraneous catalytic core and F(0) containing the membrane proton channel, linked together by a central stalk and a peripheral stalk. During catalysis, ATP synthesis in the catalytic domain of F(1) is coupled via a rotary mechanism of the central stalk subunits to proton translocation.</text>
</comment>
<comment type="function">
    <text evidence="2">Key component of the F(0) channel; it plays a direct role in translocation across the membrane. A homomeric c-ring of between 10-14 subunits forms the central stalk rotor element with the F(1) delta and epsilon subunits.</text>
</comment>
<comment type="subunit">
    <text evidence="2">F-type ATPases have 2 components, F(1) - the catalytic core - and F(0) - the membrane proton channel. F(1) has five subunits: alpha(3), beta(3), gamma(1), delta(1), epsilon(1). F(0) has three main subunits: a(1), b(2) and c(10-14). The alpha and beta chains form an alternating ring which encloses part of the gamma chain. F(1) is attached to F(0) by a central stalk formed by the gamma and epsilon chains, while a peripheral stalk is formed by the delta and b chains.</text>
</comment>
<comment type="subcellular location">
    <subcellularLocation>
        <location evidence="2">Cell inner membrane</location>
        <topology evidence="2">Multi-pass membrane protein</topology>
    </subcellularLocation>
</comment>
<comment type="miscellaneous">
    <text evidence="1">Dicyclohexylcarbodiimide (DCDD) binding to the active aspartate residue inhibits ATPase in vitro.</text>
</comment>
<comment type="similarity">
    <text evidence="2">Belongs to the ATPase C chain family.</text>
</comment>
<name>ATPL_VIBAL</name>
<protein>
    <recommendedName>
        <fullName evidence="2">ATP synthase subunit c</fullName>
    </recommendedName>
    <alternativeName>
        <fullName evidence="2">ATP synthase F(0) sector subunit c</fullName>
    </alternativeName>
    <alternativeName>
        <fullName evidence="2">F-type ATPase subunit c</fullName>
        <shortName evidence="2">F-ATPase subunit c</shortName>
    </alternativeName>
    <alternativeName>
        <fullName evidence="2">Lipid-binding protein</fullName>
    </alternativeName>
</protein>
<gene>
    <name evidence="2" type="primary">atpE</name>
    <name type="synonym">uncE</name>
</gene>
<sequence length="84" mass="8636">METLLSFSAIAVGIIVGLASLGTAIGFALLGGKFLEGAARQPEMAPMLQVKMFIIAGLLDAVPMIGIVIALLFTFANPFVGQLG</sequence>
<proteinExistence type="inferred from homology"/>
<keyword id="KW-0066">ATP synthesis</keyword>
<keyword id="KW-0997">Cell inner membrane</keyword>
<keyword id="KW-1003">Cell membrane</keyword>
<keyword id="KW-0138">CF(0)</keyword>
<keyword id="KW-0375">Hydrogen ion transport</keyword>
<keyword id="KW-0406">Ion transport</keyword>
<keyword id="KW-0446">Lipid-binding</keyword>
<keyword id="KW-0472">Membrane</keyword>
<keyword id="KW-0812">Transmembrane</keyword>
<keyword id="KW-1133">Transmembrane helix</keyword>
<keyword id="KW-0813">Transport</keyword>
<dbReference type="EMBL" id="X16050">
    <property type="protein sequence ID" value="CAA34176.1"/>
    <property type="molecule type" value="Genomic_DNA"/>
</dbReference>
<dbReference type="PIR" id="S06077">
    <property type="entry name" value="S06077"/>
</dbReference>
<dbReference type="RefSeq" id="WP_002540812.1">
    <property type="nucleotide sequence ID" value="NZ_WAHT01000005.1"/>
</dbReference>
<dbReference type="SMR" id="P0A309"/>
<dbReference type="STRING" id="663.BAU10_15105"/>
<dbReference type="GeneID" id="97172879"/>
<dbReference type="eggNOG" id="ENOG5032S3K">
    <property type="taxonomic scope" value="Bacteria"/>
</dbReference>
<dbReference type="OrthoDB" id="9811659at2"/>
<dbReference type="GO" id="GO:0005886">
    <property type="term" value="C:plasma membrane"/>
    <property type="evidence" value="ECO:0007669"/>
    <property type="project" value="UniProtKB-SubCell"/>
</dbReference>
<dbReference type="GO" id="GO:0045259">
    <property type="term" value="C:proton-transporting ATP synthase complex"/>
    <property type="evidence" value="ECO:0007669"/>
    <property type="project" value="UniProtKB-KW"/>
</dbReference>
<dbReference type="GO" id="GO:0033177">
    <property type="term" value="C:proton-transporting two-sector ATPase complex, proton-transporting domain"/>
    <property type="evidence" value="ECO:0007669"/>
    <property type="project" value="InterPro"/>
</dbReference>
<dbReference type="GO" id="GO:0008289">
    <property type="term" value="F:lipid binding"/>
    <property type="evidence" value="ECO:0007669"/>
    <property type="project" value="UniProtKB-KW"/>
</dbReference>
<dbReference type="GO" id="GO:0046933">
    <property type="term" value="F:proton-transporting ATP synthase activity, rotational mechanism"/>
    <property type="evidence" value="ECO:0007669"/>
    <property type="project" value="UniProtKB-UniRule"/>
</dbReference>
<dbReference type="CDD" id="cd18185">
    <property type="entry name" value="ATP-synt_Fo_c_ATPE"/>
    <property type="match status" value="1"/>
</dbReference>
<dbReference type="FunFam" id="1.20.20.10:FF:000002">
    <property type="entry name" value="ATP synthase subunit c"/>
    <property type="match status" value="1"/>
</dbReference>
<dbReference type="Gene3D" id="1.20.20.10">
    <property type="entry name" value="F1F0 ATP synthase subunit C"/>
    <property type="match status" value="1"/>
</dbReference>
<dbReference type="HAMAP" id="MF_01396">
    <property type="entry name" value="ATP_synth_c_bact"/>
    <property type="match status" value="1"/>
</dbReference>
<dbReference type="InterPro" id="IPR005953">
    <property type="entry name" value="ATP_synth_csu_bac/chlpt"/>
</dbReference>
<dbReference type="InterPro" id="IPR000454">
    <property type="entry name" value="ATP_synth_F0_csu"/>
</dbReference>
<dbReference type="InterPro" id="IPR020537">
    <property type="entry name" value="ATP_synth_F0_csu_DDCD_BS"/>
</dbReference>
<dbReference type="InterPro" id="IPR038662">
    <property type="entry name" value="ATP_synth_F0_csu_sf"/>
</dbReference>
<dbReference type="InterPro" id="IPR002379">
    <property type="entry name" value="ATPase_proteolipid_c-like_dom"/>
</dbReference>
<dbReference type="InterPro" id="IPR035921">
    <property type="entry name" value="F/V-ATP_Csub_sf"/>
</dbReference>
<dbReference type="NCBIfam" id="TIGR01260">
    <property type="entry name" value="ATP_synt_c"/>
    <property type="match status" value="1"/>
</dbReference>
<dbReference type="NCBIfam" id="NF005363">
    <property type="entry name" value="PRK06876.1"/>
    <property type="match status" value="1"/>
</dbReference>
<dbReference type="Pfam" id="PF00137">
    <property type="entry name" value="ATP-synt_C"/>
    <property type="match status" value="1"/>
</dbReference>
<dbReference type="PRINTS" id="PR00124">
    <property type="entry name" value="ATPASEC"/>
</dbReference>
<dbReference type="SUPFAM" id="SSF81333">
    <property type="entry name" value="F1F0 ATP synthase subunit C"/>
    <property type="match status" value="1"/>
</dbReference>
<dbReference type="PROSITE" id="PS00605">
    <property type="entry name" value="ATPASE_C"/>
    <property type="match status" value="1"/>
</dbReference>
<organism>
    <name type="scientific">Vibrio alginolyticus</name>
    <dbReference type="NCBI Taxonomy" id="663"/>
    <lineage>
        <taxon>Bacteria</taxon>
        <taxon>Pseudomonadati</taxon>
        <taxon>Pseudomonadota</taxon>
        <taxon>Gammaproteobacteria</taxon>
        <taxon>Vibrionales</taxon>
        <taxon>Vibrionaceae</taxon>
        <taxon>Vibrio</taxon>
    </lineage>
</organism>